<sequence length="361" mass="39151">MAGNTIGQLFRVTTFGESHGLALGCIVDGVPPGIPLTEADLQHDLDRRRPGTSRYTTQRREPDQVKILSGVFEGVTTGTSIGLLIENTDQRSQDYSAIKDVFRPGHADYTYEQKYGLRDYRGGGRSSARETAMRVAAGAIAKKYLAEKFGIEIRGCLTQMGDIPLEIKDWSQVEQNPFFCPDPDKIDALDELMRALKKEGDSIGAKVTVVASGVPAGLGEPVFDRLDADIAHALMSINAVKGVEIGDGFDVVALRGSQNRDEITKDGFQSNHAGGILGGISSGQQIIAHMALKPTSSITVPGRTINRFGEEVEMITKGRHDPCVGIRAVPIAEAMLAIVLMDHLLRQRAQNADVKTDIPRW</sequence>
<evidence type="ECO:0000255" key="1">
    <source>
        <dbReference type="HAMAP-Rule" id="MF_00300"/>
    </source>
</evidence>
<comment type="function">
    <text evidence="1">Catalyzes the anti-1,4-elimination of the C-3 phosphate and the C-6 proR hydrogen from 5-enolpyruvylshikimate-3-phosphate (EPSP) to yield chorismate, which is the branch point compound that serves as the starting substrate for the three terminal pathways of aromatic amino acid biosynthesis. This reaction introduces a second double bond into the aromatic ring system.</text>
</comment>
<comment type="catalytic activity">
    <reaction evidence="1">
        <text>5-O-(1-carboxyvinyl)-3-phosphoshikimate = chorismate + phosphate</text>
        <dbReference type="Rhea" id="RHEA:21020"/>
        <dbReference type="ChEBI" id="CHEBI:29748"/>
        <dbReference type="ChEBI" id="CHEBI:43474"/>
        <dbReference type="ChEBI" id="CHEBI:57701"/>
        <dbReference type="EC" id="4.2.3.5"/>
    </reaction>
</comment>
<comment type="cofactor">
    <cofactor evidence="1">
        <name>FMNH2</name>
        <dbReference type="ChEBI" id="CHEBI:57618"/>
    </cofactor>
    <text evidence="1">Reduced FMN (FMNH(2)).</text>
</comment>
<comment type="pathway">
    <text evidence="1">Metabolic intermediate biosynthesis; chorismate biosynthesis; chorismate from D-erythrose 4-phosphate and phosphoenolpyruvate: step 7/7.</text>
</comment>
<comment type="subunit">
    <text evidence="1">Homotetramer.</text>
</comment>
<comment type="similarity">
    <text evidence="1">Belongs to the chorismate synthase family.</text>
</comment>
<dbReference type="EC" id="4.2.3.5" evidence="1"/>
<dbReference type="EMBL" id="CU928160">
    <property type="protein sequence ID" value="CAQ99248.1"/>
    <property type="molecule type" value="Genomic_DNA"/>
</dbReference>
<dbReference type="RefSeq" id="WP_001297933.1">
    <property type="nucleotide sequence ID" value="NC_011741.1"/>
</dbReference>
<dbReference type="SMR" id="B7M6L0"/>
<dbReference type="KEGG" id="ecr:ECIAI1_2406"/>
<dbReference type="HOGENOM" id="CLU_034547_0_2_6"/>
<dbReference type="UniPathway" id="UPA00053">
    <property type="reaction ID" value="UER00090"/>
</dbReference>
<dbReference type="GO" id="GO:0005829">
    <property type="term" value="C:cytosol"/>
    <property type="evidence" value="ECO:0007669"/>
    <property type="project" value="TreeGrafter"/>
</dbReference>
<dbReference type="GO" id="GO:0004107">
    <property type="term" value="F:chorismate synthase activity"/>
    <property type="evidence" value="ECO:0007669"/>
    <property type="project" value="UniProtKB-UniRule"/>
</dbReference>
<dbReference type="GO" id="GO:0010181">
    <property type="term" value="F:FMN binding"/>
    <property type="evidence" value="ECO:0007669"/>
    <property type="project" value="TreeGrafter"/>
</dbReference>
<dbReference type="GO" id="GO:0008652">
    <property type="term" value="P:amino acid biosynthetic process"/>
    <property type="evidence" value="ECO:0007669"/>
    <property type="project" value="UniProtKB-KW"/>
</dbReference>
<dbReference type="GO" id="GO:0009073">
    <property type="term" value="P:aromatic amino acid family biosynthetic process"/>
    <property type="evidence" value="ECO:0007669"/>
    <property type="project" value="UniProtKB-KW"/>
</dbReference>
<dbReference type="GO" id="GO:0009423">
    <property type="term" value="P:chorismate biosynthetic process"/>
    <property type="evidence" value="ECO:0007669"/>
    <property type="project" value="UniProtKB-UniRule"/>
</dbReference>
<dbReference type="CDD" id="cd07304">
    <property type="entry name" value="Chorismate_synthase"/>
    <property type="match status" value="1"/>
</dbReference>
<dbReference type="FunFam" id="3.60.150.10:FF:000001">
    <property type="entry name" value="Chorismate synthase"/>
    <property type="match status" value="1"/>
</dbReference>
<dbReference type="Gene3D" id="3.60.150.10">
    <property type="entry name" value="Chorismate synthase AroC"/>
    <property type="match status" value="1"/>
</dbReference>
<dbReference type="HAMAP" id="MF_00300">
    <property type="entry name" value="Chorismate_synth"/>
    <property type="match status" value="1"/>
</dbReference>
<dbReference type="InterPro" id="IPR000453">
    <property type="entry name" value="Chorismate_synth"/>
</dbReference>
<dbReference type="InterPro" id="IPR035904">
    <property type="entry name" value="Chorismate_synth_AroC_sf"/>
</dbReference>
<dbReference type="InterPro" id="IPR020541">
    <property type="entry name" value="Chorismate_synthase_CS"/>
</dbReference>
<dbReference type="NCBIfam" id="TIGR00033">
    <property type="entry name" value="aroC"/>
    <property type="match status" value="1"/>
</dbReference>
<dbReference type="NCBIfam" id="NF003793">
    <property type="entry name" value="PRK05382.1"/>
    <property type="match status" value="1"/>
</dbReference>
<dbReference type="PANTHER" id="PTHR21085">
    <property type="entry name" value="CHORISMATE SYNTHASE"/>
    <property type="match status" value="1"/>
</dbReference>
<dbReference type="PANTHER" id="PTHR21085:SF0">
    <property type="entry name" value="CHORISMATE SYNTHASE"/>
    <property type="match status" value="1"/>
</dbReference>
<dbReference type="Pfam" id="PF01264">
    <property type="entry name" value="Chorismate_synt"/>
    <property type="match status" value="1"/>
</dbReference>
<dbReference type="PIRSF" id="PIRSF001456">
    <property type="entry name" value="Chorismate_synth"/>
    <property type="match status" value="1"/>
</dbReference>
<dbReference type="SUPFAM" id="SSF103263">
    <property type="entry name" value="Chorismate synthase, AroC"/>
    <property type="match status" value="1"/>
</dbReference>
<dbReference type="PROSITE" id="PS00787">
    <property type="entry name" value="CHORISMATE_SYNTHASE_1"/>
    <property type="match status" value="1"/>
</dbReference>
<dbReference type="PROSITE" id="PS00788">
    <property type="entry name" value="CHORISMATE_SYNTHASE_2"/>
    <property type="match status" value="1"/>
</dbReference>
<dbReference type="PROSITE" id="PS00789">
    <property type="entry name" value="CHORISMATE_SYNTHASE_3"/>
    <property type="match status" value="1"/>
</dbReference>
<gene>
    <name evidence="1" type="primary">aroC</name>
    <name type="ordered locus">ECIAI1_2406</name>
</gene>
<reference key="1">
    <citation type="journal article" date="2009" name="PLoS Genet.">
        <title>Organised genome dynamics in the Escherichia coli species results in highly diverse adaptive paths.</title>
        <authorList>
            <person name="Touchon M."/>
            <person name="Hoede C."/>
            <person name="Tenaillon O."/>
            <person name="Barbe V."/>
            <person name="Baeriswyl S."/>
            <person name="Bidet P."/>
            <person name="Bingen E."/>
            <person name="Bonacorsi S."/>
            <person name="Bouchier C."/>
            <person name="Bouvet O."/>
            <person name="Calteau A."/>
            <person name="Chiapello H."/>
            <person name="Clermont O."/>
            <person name="Cruveiller S."/>
            <person name="Danchin A."/>
            <person name="Diard M."/>
            <person name="Dossat C."/>
            <person name="Karoui M.E."/>
            <person name="Frapy E."/>
            <person name="Garry L."/>
            <person name="Ghigo J.M."/>
            <person name="Gilles A.M."/>
            <person name="Johnson J."/>
            <person name="Le Bouguenec C."/>
            <person name="Lescat M."/>
            <person name="Mangenot S."/>
            <person name="Martinez-Jehanne V."/>
            <person name="Matic I."/>
            <person name="Nassif X."/>
            <person name="Oztas S."/>
            <person name="Petit M.A."/>
            <person name="Pichon C."/>
            <person name="Rouy Z."/>
            <person name="Ruf C.S."/>
            <person name="Schneider D."/>
            <person name="Tourret J."/>
            <person name="Vacherie B."/>
            <person name="Vallenet D."/>
            <person name="Medigue C."/>
            <person name="Rocha E.P.C."/>
            <person name="Denamur E."/>
        </authorList>
    </citation>
    <scope>NUCLEOTIDE SEQUENCE [LARGE SCALE GENOMIC DNA]</scope>
    <source>
        <strain>IAI1</strain>
    </source>
</reference>
<keyword id="KW-0028">Amino-acid biosynthesis</keyword>
<keyword id="KW-0057">Aromatic amino acid biosynthesis</keyword>
<keyword id="KW-0274">FAD</keyword>
<keyword id="KW-0285">Flavoprotein</keyword>
<keyword id="KW-0288">FMN</keyword>
<keyword id="KW-0456">Lyase</keyword>
<keyword id="KW-0521">NADP</keyword>
<protein>
    <recommendedName>
        <fullName evidence="1">Chorismate synthase</fullName>
        <shortName evidence="1">CS</shortName>
        <ecNumber evidence="1">4.2.3.5</ecNumber>
    </recommendedName>
    <alternativeName>
        <fullName evidence="1">5-enolpyruvylshikimate-3-phosphate phospholyase</fullName>
    </alternativeName>
</protein>
<proteinExistence type="inferred from homology"/>
<organism>
    <name type="scientific">Escherichia coli O8 (strain IAI1)</name>
    <dbReference type="NCBI Taxonomy" id="585034"/>
    <lineage>
        <taxon>Bacteria</taxon>
        <taxon>Pseudomonadati</taxon>
        <taxon>Pseudomonadota</taxon>
        <taxon>Gammaproteobacteria</taxon>
        <taxon>Enterobacterales</taxon>
        <taxon>Enterobacteriaceae</taxon>
        <taxon>Escherichia</taxon>
    </lineage>
</organism>
<accession>B7M6L0</accession>
<name>AROC_ECO8A</name>
<feature type="chain" id="PRO_1000119491" description="Chorismate synthase">
    <location>
        <begin position="1"/>
        <end position="361"/>
    </location>
</feature>
<feature type="binding site" evidence="1">
    <location>
        <position position="48"/>
    </location>
    <ligand>
        <name>NADP(+)</name>
        <dbReference type="ChEBI" id="CHEBI:58349"/>
    </ligand>
</feature>
<feature type="binding site" evidence="1">
    <location>
        <position position="54"/>
    </location>
    <ligand>
        <name>NADP(+)</name>
        <dbReference type="ChEBI" id="CHEBI:58349"/>
    </ligand>
</feature>
<feature type="binding site" evidence="1">
    <location>
        <begin position="125"/>
        <end position="127"/>
    </location>
    <ligand>
        <name>FMN</name>
        <dbReference type="ChEBI" id="CHEBI:58210"/>
    </ligand>
</feature>
<feature type="binding site" evidence="1">
    <location>
        <begin position="238"/>
        <end position="239"/>
    </location>
    <ligand>
        <name>FMN</name>
        <dbReference type="ChEBI" id="CHEBI:58210"/>
    </ligand>
</feature>
<feature type="binding site" evidence="1">
    <location>
        <position position="278"/>
    </location>
    <ligand>
        <name>FMN</name>
        <dbReference type="ChEBI" id="CHEBI:58210"/>
    </ligand>
</feature>
<feature type="binding site" evidence="1">
    <location>
        <begin position="293"/>
        <end position="297"/>
    </location>
    <ligand>
        <name>FMN</name>
        <dbReference type="ChEBI" id="CHEBI:58210"/>
    </ligand>
</feature>
<feature type="binding site" evidence="1">
    <location>
        <position position="319"/>
    </location>
    <ligand>
        <name>FMN</name>
        <dbReference type="ChEBI" id="CHEBI:58210"/>
    </ligand>
</feature>